<organism>
    <name type="scientific">Homo sapiens</name>
    <name type="common">Human</name>
    <dbReference type="NCBI Taxonomy" id="9606"/>
    <lineage>
        <taxon>Eukaryota</taxon>
        <taxon>Metazoa</taxon>
        <taxon>Chordata</taxon>
        <taxon>Craniata</taxon>
        <taxon>Vertebrata</taxon>
        <taxon>Euteleostomi</taxon>
        <taxon>Mammalia</taxon>
        <taxon>Eutheria</taxon>
        <taxon>Euarchontoglires</taxon>
        <taxon>Primates</taxon>
        <taxon>Haplorrhini</taxon>
        <taxon>Catarrhini</taxon>
        <taxon>Hominidae</taxon>
        <taxon>Homo</taxon>
    </lineage>
</organism>
<reference key="1">
    <citation type="journal article" date="1995" name="Immunity">
        <title>A novel leukointegrin, alpha d beta 2, binds preferentially to ICAM-3.</title>
        <authorList>
            <person name="Van der Vieren M."/>
            <person name="Le Trong H."/>
            <person name="Wood C.L."/>
            <person name="Moore P.F."/>
            <person name="St John T."/>
            <person name="Staunton D.E."/>
            <person name="Gallatin W.M."/>
        </authorList>
    </citation>
    <scope>NUCLEOTIDE SEQUENCE [MRNA]</scope>
    <source>
        <tissue>Spleen</tissue>
    </source>
</reference>
<reference key="2">
    <citation type="journal article" date="2000" name="J. Biol. Chem.">
        <title>Structural and functional characterization of the leukocyte integrin gene CD11d. Essential role of Sp1 and Sp3.</title>
        <authorList>
            <person name="Noti J.D."/>
            <person name="Johnson A.K."/>
            <person name="Dillon J.D."/>
        </authorList>
    </citation>
    <scope>NUCLEOTIDE SEQUENCE [GENOMIC DNA] OF 1-235</scope>
</reference>
<reference key="3">
    <citation type="journal article" date="1996" name="Gene">
        <title>Cloning and chromosomal localization of a novel gene-encoding a human beta 2-integrin alpha subunit.</title>
        <authorList>
            <person name="Wong D.A."/>
            <person name="Davis E.M."/>
            <person name="LeBeau M."/>
            <person name="Springer T.A."/>
        </authorList>
    </citation>
    <scope>NUCLEOTIDE SEQUENCE [GENOMIC DNA] OF 467-536; 570-601; 632-665; 787-833 AND 909-1124</scope>
</reference>
<reference key="4">
    <citation type="journal article" date="1998" name="J. Exp. Med.">
        <title>Alphadbeta2 integrin is expressed on human eosinophils and functions as an alternative ligand for vascular cell adhesion molecule 1 (VCAM-1).</title>
        <authorList>
            <person name="Grayson M.H."/>
            <person name="Van der Vieren M."/>
            <person name="Sterbinsky S.A."/>
            <person name="Michael Gallatin W."/>
            <person name="Hoffman P.A."/>
            <person name="Staunton D.E."/>
            <person name="Bochner B.S."/>
        </authorList>
    </citation>
    <scope>INTERACTION WITH VCAM1</scope>
</reference>
<reference key="5">
    <citation type="journal article" date="1999" name="J. Immunol.">
        <title>The leukocyte integrin alpha D beta 2 binds VCAM-1: evidence for a binding interface between I domain and VCAM-1.</title>
        <authorList>
            <person name="Van der Vieren M."/>
            <person name="Crowe D.T."/>
            <person name="Hoekstra D."/>
            <person name="Vazeux R."/>
            <person name="Hoffman P.A."/>
            <person name="Grayson M.H."/>
            <person name="Bochner B.S."/>
            <person name="Gallatin W.M."/>
            <person name="Staunton D.E."/>
        </authorList>
    </citation>
    <scope>INTERACTION WITH VCAM1</scope>
</reference>
<name>ITAD_HUMAN</name>
<dbReference type="EMBL" id="U37028">
    <property type="protein sequence ID" value="AAB38547.1"/>
    <property type="molecule type" value="mRNA"/>
</dbReference>
<dbReference type="EMBL" id="AF187881">
    <property type="protein sequence ID" value="AAF62875.1"/>
    <property type="molecule type" value="Genomic_DNA"/>
</dbReference>
<dbReference type="EMBL" id="U40274">
    <property type="protein sequence ID" value="AAB60634.1"/>
    <property type="status" value="ALT_SEQ"/>
    <property type="molecule type" value="Genomic_DNA"/>
</dbReference>
<dbReference type="EMBL" id="U40275">
    <property type="protein sequence ID" value="AAB60635.1"/>
    <property type="molecule type" value="Genomic_DNA"/>
</dbReference>
<dbReference type="EMBL" id="U40276">
    <property type="protein sequence ID" value="AAB60636.1"/>
    <property type="molecule type" value="Genomic_DNA"/>
</dbReference>
<dbReference type="EMBL" id="U40277">
    <property type="protein sequence ID" value="AAB60637.1"/>
    <property type="molecule type" value="Genomic_DNA"/>
</dbReference>
<dbReference type="EMBL" id="U40279">
    <property type="protein sequence ID" value="AAB60638.1"/>
    <property type="molecule type" value="Genomic_DNA"/>
</dbReference>
<dbReference type="EMBL" id="U40278">
    <property type="protein sequence ID" value="AAB60638.1"/>
    <property type="status" value="JOINED"/>
    <property type="molecule type" value="Genomic_DNA"/>
</dbReference>
<dbReference type="CCDS" id="CCDS32438.1"/>
<dbReference type="RefSeq" id="NP_001305114.1">
    <property type="nucleotide sequence ID" value="NM_001318185.1"/>
</dbReference>
<dbReference type="RefSeq" id="NP_005344.2">
    <property type="nucleotide sequence ID" value="NM_005353.2"/>
</dbReference>
<dbReference type="SMR" id="Q13349"/>
<dbReference type="BioGRID" id="109887">
    <property type="interactions" value="54"/>
</dbReference>
<dbReference type="ComplexPortal" id="CPX-1828">
    <property type="entry name" value="Integrin alphaD-beta2 complex"/>
</dbReference>
<dbReference type="FunCoup" id="Q13349">
    <property type="interactions" value="59"/>
</dbReference>
<dbReference type="IntAct" id="Q13349">
    <property type="interactions" value="41"/>
</dbReference>
<dbReference type="STRING" id="9606.ENSP00000373854"/>
<dbReference type="GlyCosmos" id="Q13349">
    <property type="glycosylation" value="9 sites, No reported glycans"/>
</dbReference>
<dbReference type="GlyGen" id="Q13349">
    <property type="glycosylation" value="9 sites"/>
</dbReference>
<dbReference type="iPTMnet" id="Q13349"/>
<dbReference type="PhosphoSitePlus" id="Q13349"/>
<dbReference type="SwissPalm" id="Q13349"/>
<dbReference type="BioMuta" id="ITGAD"/>
<dbReference type="DMDM" id="296434544"/>
<dbReference type="jPOST" id="Q13349"/>
<dbReference type="MassIVE" id="Q13349"/>
<dbReference type="PaxDb" id="9606-ENSP00000373854"/>
<dbReference type="PeptideAtlas" id="Q13349"/>
<dbReference type="Antibodypedia" id="27846">
    <property type="antibodies" value="137 antibodies from 21 providers"/>
</dbReference>
<dbReference type="DNASU" id="3681"/>
<dbReference type="Ensembl" id="ENST00000389202.3">
    <property type="protein sequence ID" value="ENSP00000373854.2"/>
    <property type="gene ID" value="ENSG00000156886.12"/>
</dbReference>
<dbReference type="GeneID" id="3681"/>
<dbReference type="KEGG" id="hsa:3681"/>
<dbReference type="MANE-Select" id="ENST00000389202.3">
    <property type="protein sequence ID" value="ENSP00000373854.2"/>
    <property type="RefSeq nucleotide sequence ID" value="NM_005353.3"/>
    <property type="RefSeq protein sequence ID" value="NP_005344.2"/>
</dbReference>
<dbReference type="UCSC" id="uc002ebv.1">
    <property type="organism name" value="human"/>
</dbReference>
<dbReference type="AGR" id="HGNC:6146"/>
<dbReference type="CTD" id="3681"/>
<dbReference type="DisGeNET" id="3681"/>
<dbReference type="GeneCards" id="ITGAD"/>
<dbReference type="HGNC" id="HGNC:6146">
    <property type="gene designation" value="ITGAD"/>
</dbReference>
<dbReference type="HPA" id="ENSG00000156886">
    <property type="expression patterns" value="Tissue enriched (lymphoid)"/>
</dbReference>
<dbReference type="MalaCards" id="ITGAD"/>
<dbReference type="MIM" id="602453">
    <property type="type" value="gene"/>
</dbReference>
<dbReference type="neXtProt" id="NX_Q13349"/>
<dbReference type="OpenTargets" id="ENSG00000156886"/>
<dbReference type="PharmGKB" id="PA29946"/>
<dbReference type="VEuPathDB" id="HostDB:ENSG00000156886"/>
<dbReference type="eggNOG" id="KOG3637">
    <property type="taxonomic scope" value="Eukaryota"/>
</dbReference>
<dbReference type="GeneTree" id="ENSGT00940000160953"/>
<dbReference type="HOGENOM" id="CLU_004111_3_0_1"/>
<dbReference type="InParanoid" id="Q13349"/>
<dbReference type="OMA" id="EHRYHVN"/>
<dbReference type="OrthoDB" id="5317514at2759"/>
<dbReference type="PAN-GO" id="Q13349">
    <property type="GO annotations" value="7 GO annotations based on evolutionary models"/>
</dbReference>
<dbReference type="PhylomeDB" id="Q13349"/>
<dbReference type="TreeFam" id="TF105391"/>
<dbReference type="PathwayCommons" id="Q13349"/>
<dbReference type="Reactome" id="R-HSA-216083">
    <property type="pathway name" value="Integrin cell surface interactions"/>
</dbReference>
<dbReference type="SignaLink" id="Q13349"/>
<dbReference type="SIGNOR" id="Q13349"/>
<dbReference type="BioGRID-ORCS" id="3681">
    <property type="hits" value="9 hits in 1142 CRISPR screens"/>
</dbReference>
<dbReference type="ChiTaRS" id="ITGAD">
    <property type="organism name" value="human"/>
</dbReference>
<dbReference type="GeneWiki" id="ITGAD"/>
<dbReference type="GenomeRNAi" id="3681"/>
<dbReference type="Pharos" id="Q13349">
    <property type="development level" value="Tbio"/>
</dbReference>
<dbReference type="PRO" id="PR:Q13349"/>
<dbReference type="Proteomes" id="UP000005640">
    <property type="component" value="Chromosome 16"/>
</dbReference>
<dbReference type="RNAct" id="Q13349">
    <property type="molecule type" value="protein"/>
</dbReference>
<dbReference type="Bgee" id="ENSG00000156886">
    <property type="expression patterns" value="Expressed in granulocyte and 91 other cell types or tissues"/>
</dbReference>
<dbReference type="GO" id="GO:0009986">
    <property type="term" value="C:cell surface"/>
    <property type="evidence" value="ECO:0000305"/>
    <property type="project" value="UniProtKB"/>
</dbReference>
<dbReference type="GO" id="GO:0009897">
    <property type="term" value="C:external side of plasma membrane"/>
    <property type="evidence" value="ECO:0000318"/>
    <property type="project" value="GO_Central"/>
</dbReference>
<dbReference type="GO" id="GO:0008305">
    <property type="term" value="C:integrin complex"/>
    <property type="evidence" value="ECO:0000318"/>
    <property type="project" value="GO_Central"/>
</dbReference>
<dbReference type="GO" id="GO:0005886">
    <property type="term" value="C:plasma membrane"/>
    <property type="evidence" value="ECO:0000304"/>
    <property type="project" value="Reactome"/>
</dbReference>
<dbReference type="GO" id="GO:0005178">
    <property type="term" value="F:integrin binding"/>
    <property type="evidence" value="ECO:0000318"/>
    <property type="project" value="GO_Central"/>
</dbReference>
<dbReference type="GO" id="GO:0046872">
    <property type="term" value="F:metal ion binding"/>
    <property type="evidence" value="ECO:0007669"/>
    <property type="project" value="UniProtKB-KW"/>
</dbReference>
<dbReference type="GO" id="GO:0033627">
    <property type="term" value="P:cell adhesion mediated by integrin"/>
    <property type="evidence" value="ECO:0000318"/>
    <property type="project" value="GO_Central"/>
</dbReference>
<dbReference type="GO" id="GO:0098609">
    <property type="term" value="P:cell-cell adhesion"/>
    <property type="evidence" value="ECO:0000318"/>
    <property type="project" value="GO_Central"/>
</dbReference>
<dbReference type="GO" id="GO:0034113">
    <property type="term" value="P:heterotypic cell-cell adhesion"/>
    <property type="evidence" value="ECO:0000315"/>
    <property type="project" value="UniProtKB"/>
</dbReference>
<dbReference type="GO" id="GO:0006955">
    <property type="term" value="P:immune response"/>
    <property type="evidence" value="ECO:0000303"/>
    <property type="project" value="UniProtKB"/>
</dbReference>
<dbReference type="GO" id="GO:0007229">
    <property type="term" value="P:integrin-mediated signaling pathway"/>
    <property type="evidence" value="ECO:0000318"/>
    <property type="project" value="GO_Central"/>
</dbReference>
<dbReference type="CDD" id="cd01469">
    <property type="entry name" value="vWA_integrins_alpha_subunit"/>
    <property type="match status" value="1"/>
</dbReference>
<dbReference type="FunFam" id="2.130.10.130:FF:000005">
    <property type="entry name" value="Integrin alpha L"/>
    <property type="match status" value="1"/>
</dbReference>
<dbReference type="FunFam" id="2.60.40.1510:FF:000009">
    <property type="entry name" value="Integrin alpha M"/>
    <property type="match status" value="1"/>
</dbReference>
<dbReference type="FunFam" id="2.60.40.1530:FF:000003">
    <property type="entry name" value="Integrin alpha M"/>
    <property type="match status" value="1"/>
</dbReference>
<dbReference type="FunFam" id="3.40.50.410:FF:000067">
    <property type="entry name" value="Integrin alpha M"/>
    <property type="match status" value="1"/>
</dbReference>
<dbReference type="FunFam" id="1.20.5.930:FF:000004">
    <property type="entry name" value="Integrin subunit alpha M"/>
    <property type="match status" value="1"/>
</dbReference>
<dbReference type="FunFam" id="2.60.40.1460:FF:000001">
    <property type="entry name" value="Integrin, alpha V"/>
    <property type="match status" value="1"/>
</dbReference>
<dbReference type="Gene3D" id="1.20.5.930">
    <property type="entry name" value="Bicelle-embedded integrin alpha(iib) transmembrane segment"/>
    <property type="match status" value="1"/>
</dbReference>
<dbReference type="Gene3D" id="2.130.10.130">
    <property type="entry name" value="Integrin alpha, N-terminal"/>
    <property type="match status" value="1"/>
</dbReference>
<dbReference type="Gene3D" id="2.60.40.1460">
    <property type="entry name" value="Integrin domains. Chain A, domain 2"/>
    <property type="match status" value="1"/>
</dbReference>
<dbReference type="Gene3D" id="2.60.40.1510">
    <property type="entry name" value="ntegrin, alpha v. Chain A, domain 3"/>
    <property type="match status" value="1"/>
</dbReference>
<dbReference type="Gene3D" id="2.60.40.1530">
    <property type="entry name" value="ntegrin, alpha v. Chain A, domain 4"/>
    <property type="match status" value="1"/>
</dbReference>
<dbReference type="Gene3D" id="3.40.50.410">
    <property type="entry name" value="von Willebrand factor, type A domain"/>
    <property type="match status" value="1"/>
</dbReference>
<dbReference type="InterPro" id="IPR013517">
    <property type="entry name" value="FG-GAP"/>
</dbReference>
<dbReference type="InterPro" id="IPR013519">
    <property type="entry name" value="Int_alpha_beta-p"/>
</dbReference>
<dbReference type="InterPro" id="IPR000413">
    <property type="entry name" value="Integrin_alpha"/>
</dbReference>
<dbReference type="InterPro" id="IPR018184">
    <property type="entry name" value="Integrin_alpha_C_CS"/>
</dbReference>
<dbReference type="InterPro" id="IPR013649">
    <property type="entry name" value="Integrin_alpha_Ig-like_1"/>
</dbReference>
<dbReference type="InterPro" id="IPR048285">
    <property type="entry name" value="Integrin_alpha_Ig-like_2"/>
</dbReference>
<dbReference type="InterPro" id="IPR028994">
    <property type="entry name" value="Integrin_alpha_N"/>
</dbReference>
<dbReference type="InterPro" id="IPR032695">
    <property type="entry name" value="Integrin_dom_sf"/>
</dbReference>
<dbReference type="InterPro" id="IPR048633">
    <property type="entry name" value="ITGAX-like_Ig_3"/>
</dbReference>
<dbReference type="InterPro" id="IPR002035">
    <property type="entry name" value="VWF_A"/>
</dbReference>
<dbReference type="InterPro" id="IPR036465">
    <property type="entry name" value="vWFA_dom_sf"/>
</dbReference>
<dbReference type="PANTHER" id="PTHR23220">
    <property type="entry name" value="INTEGRIN ALPHA"/>
    <property type="match status" value="1"/>
</dbReference>
<dbReference type="PANTHER" id="PTHR23220:SF132">
    <property type="entry name" value="INTEGRIN ALPHA-D"/>
    <property type="match status" value="1"/>
</dbReference>
<dbReference type="Pfam" id="PF01839">
    <property type="entry name" value="FG-GAP"/>
    <property type="match status" value="2"/>
</dbReference>
<dbReference type="Pfam" id="PF08441">
    <property type="entry name" value="Integrin_A_Ig_1"/>
    <property type="match status" value="1"/>
</dbReference>
<dbReference type="Pfam" id="PF20805">
    <property type="entry name" value="Integrin_A_Ig_2"/>
    <property type="match status" value="1"/>
</dbReference>
<dbReference type="Pfam" id="PF00357">
    <property type="entry name" value="Integrin_alpha"/>
    <property type="match status" value="1"/>
</dbReference>
<dbReference type="Pfam" id="PF21520">
    <property type="entry name" value="ITGAX-like_Ig_3"/>
    <property type="match status" value="1"/>
</dbReference>
<dbReference type="Pfam" id="PF00092">
    <property type="entry name" value="VWA"/>
    <property type="match status" value="1"/>
</dbReference>
<dbReference type="PRINTS" id="PR01185">
    <property type="entry name" value="INTEGRINA"/>
</dbReference>
<dbReference type="PRINTS" id="PR00453">
    <property type="entry name" value="VWFADOMAIN"/>
</dbReference>
<dbReference type="SMART" id="SM00191">
    <property type="entry name" value="Int_alpha"/>
    <property type="match status" value="5"/>
</dbReference>
<dbReference type="SMART" id="SM00327">
    <property type="entry name" value="VWA"/>
    <property type="match status" value="1"/>
</dbReference>
<dbReference type="SUPFAM" id="SSF69318">
    <property type="entry name" value="Integrin alpha N-terminal domain"/>
    <property type="match status" value="1"/>
</dbReference>
<dbReference type="SUPFAM" id="SSF69179">
    <property type="entry name" value="Integrin domains"/>
    <property type="match status" value="3"/>
</dbReference>
<dbReference type="SUPFAM" id="SSF53300">
    <property type="entry name" value="vWA-like"/>
    <property type="match status" value="1"/>
</dbReference>
<dbReference type="PROSITE" id="PS51470">
    <property type="entry name" value="FG_GAP"/>
    <property type="match status" value="7"/>
</dbReference>
<dbReference type="PROSITE" id="PS00242">
    <property type="entry name" value="INTEGRIN_ALPHA"/>
    <property type="match status" value="1"/>
</dbReference>
<dbReference type="PROSITE" id="PS50234">
    <property type="entry name" value="VWFA"/>
    <property type="match status" value="1"/>
</dbReference>
<feature type="signal peptide" evidence="3">
    <location>
        <begin position="1"/>
        <end position="17"/>
    </location>
</feature>
<feature type="chain" id="PRO_0000016296" description="Integrin alpha-D">
    <location>
        <begin position="18"/>
        <end position="1161"/>
    </location>
</feature>
<feature type="topological domain" description="Extracellular" evidence="3">
    <location>
        <begin position="18"/>
        <end position="1099"/>
    </location>
</feature>
<feature type="transmembrane region" description="Helical" evidence="3">
    <location>
        <begin position="1100"/>
        <end position="1120"/>
    </location>
</feature>
<feature type="topological domain" description="Cytoplasmic" evidence="3">
    <location>
        <begin position="1121"/>
        <end position="1161"/>
    </location>
</feature>
<feature type="repeat" description="FG-GAP 1" evidence="5">
    <location>
        <begin position="19"/>
        <end position="76"/>
    </location>
</feature>
<feature type="repeat" description="FG-GAP 2" evidence="5">
    <location>
        <begin position="77"/>
        <end position="136"/>
    </location>
</feature>
<feature type="domain" description="VWFA" evidence="4">
    <location>
        <begin position="150"/>
        <end position="332"/>
    </location>
</feature>
<feature type="repeat" description="FG-GAP 3" evidence="5">
    <location>
        <begin position="339"/>
        <end position="390"/>
    </location>
</feature>
<feature type="repeat" description="FG-GAP 4" evidence="5">
    <location>
        <begin position="391"/>
        <end position="442"/>
    </location>
</feature>
<feature type="repeat" description="FG-GAP 5" evidence="5">
    <location>
        <begin position="443"/>
        <end position="503"/>
    </location>
</feature>
<feature type="repeat" description="FG-GAP 6" evidence="5">
    <location>
        <begin position="506"/>
        <end position="564"/>
    </location>
</feature>
<feature type="repeat" description="FG-GAP 7" evidence="5">
    <location>
        <begin position="569"/>
        <end position="629"/>
    </location>
</feature>
<feature type="short sequence motif" description="GFFKR motif">
    <location>
        <begin position="1126"/>
        <end position="1130"/>
    </location>
</feature>
<feature type="binding site" evidence="2">
    <location>
        <position position="465"/>
    </location>
    <ligand>
        <name>Ca(2+)</name>
        <dbReference type="ChEBI" id="CHEBI:29108"/>
        <label>1</label>
    </ligand>
</feature>
<feature type="binding site" evidence="2">
    <location>
        <position position="467"/>
    </location>
    <ligand>
        <name>Ca(2+)</name>
        <dbReference type="ChEBI" id="CHEBI:29108"/>
        <label>1</label>
    </ligand>
</feature>
<feature type="binding site" evidence="2">
    <location>
        <position position="469"/>
    </location>
    <ligand>
        <name>Ca(2+)</name>
        <dbReference type="ChEBI" id="CHEBI:29108"/>
        <label>1</label>
    </ligand>
</feature>
<feature type="binding site" evidence="2">
    <location>
        <position position="473"/>
    </location>
    <ligand>
        <name>Ca(2+)</name>
        <dbReference type="ChEBI" id="CHEBI:29108"/>
        <label>1</label>
    </ligand>
</feature>
<feature type="binding site" evidence="2">
    <location>
        <position position="529"/>
    </location>
    <ligand>
        <name>Ca(2+)</name>
        <dbReference type="ChEBI" id="CHEBI:29108"/>
        <label>2</label>
    </ligand>
</feature>
<feature type="binding site" evidence="2">
    <location>
        <position position="531"/>
    </location>
    <ligand>
        <name>Ca(2+)</name>
        <dbReference type="ChEBI" id="CHEBI:29108"/>
        <label>2</label>
    </ligand>
</feature>
<feature type="binding site" evidence="2">
    <location>
        <position position="533"/>
    </location>
    <ligand>
        <name>Ca(2+)</name>
        <dbReference type="ChEBI" id="CHEBI:29108"/>
        <label>2</label>
    </ligand>
</feature>
<feature type="binding site" evidence="2">
    <location>
        <position position="537"/>
    </location>
    <ligand>
        <name>Ca(2+)</name>
        <dbReference type="ChEBI" id="CHEBI:29108"/>
        <label>2</label>
    </ligand>
</feature>
<feature type="binding site" evidence="2">
    <location>
        <position position="592"/>
    </location>
    <ligand>
        <name>Ca(2+)</name>
        <dbReference type="ChEBI" id="CHEBI:29108"/>
        <label>3</label>
    </ligand>
</feature>
<feature type="binding site" evidence="2">
    <location>
        <position position="596"/>
    </location>
    <ligand>
        <name>Ca(2+)</name>
        <dbReference type="ChEBI" id="CHEBI:29108"/>
        <label>3</label>
    </ligand>
</feature>
<feature type="binding site" evidence="2">
    <location>
        <position position="600"/>
    </location>
    <ligand>
        <name>Ca(2+)</name>
        <dbReference type="ChEBI" id="CHEBI:29108"/>
        <label>3</label>
    </ligand>
</feature>
<feature type="glycosylation site" description="N-linked (GlcNAc...) asparagine" evidence="3">
    <location>
        <position position="59"/>
    </location>
</feature>
<feature type="glycosylation site" description="N-linked (GlcNAc...) asparagine" evidence="3">
    <location>
        <position position="87"/>
    </location>
</feature>
<feature type="glycosylation site" description="N-linked (GlcNAc...) asparagine" evidence="3">
    <location>
        <position position="99"/>
    </location>
</feature>
<feature type="glycosylation site" description="N-linked (GlcNAc...) asparagine" evidence="3">
    <location>
        <position position="391"/>
    </location>
</feature>
<feature type="glycosylation site" description="N-linked (GlcNAc...) asparagine" evidence="3">
    <location>
        <position position="690"/>
    </location>
</feature>
<feature type="glycosylation site" description="N-linked (GlcNAc...) asparagine" evidence="3">
    <location>
        <position position="732"/>
    </location>
</feature>
<feature type="glycosylation site" description="N-linked (GlcNAc...) asparagine" evidence="3">
    <location>
        <position position="872"/>
    </location>
</feature>
<feature type="glycosylation site" description="N-linked (GlcNAc...) asparagine" evidence="3">
    <location>
        <position position="956"/>
    </location>
</feature>
<feature type="glycosylation site" description="N-linked (GlcNAc...) asparagine" evidence="3">
    <location>
        <position position="1045"/>
    </location>
</feature>
<feature type="disulfide bond" evidence="1">
    <location>
        <begin position="67"/>
        <end position="74"/>
    </location>
</feature>
<feature type="disulfide bond" evidence="1">
    <location>
        <begin position="106"/>
        <end position="124"/>
    </location>
</feature>
<feature type="disulfide bond" evidence="1">
    <location>
        <begin position="654"/>
        <end position="709"/>
    </location>
</feature>
<feature type="disulfide bond" evidence="1">
    <location>
        <begin position="768"/>
        <end position="774"/>
    </location>
</feature>
<feature type="disulfide bond" evidence="1">
    <location>
        <begin position="845"/>
        <end position="860"/>
    </location>
</feature>
<feature type="disulfide bond" evidence="1">
    <location>
        <begin position="993"/>
        <end position="1017"/>
    </location>
</feature>
<feature type="disulfide bond" evidence="1">
    <location>
        <begin position="1022"/>
        <end position="1027"/>
    </location>
</feature>
<feature type="sequence conflict" description="In Ref. 1; AAB38547." evidence="6" ref="1">
    <original>G</original>
    <variation>GQ</variation>
    <location>
        <position position="499"/>
    </location>
</feature>
<feature type="sequence conflict" description="In Ref. 3; AAB60637." evidence="6" ref="3">
    <original>L</original>
    <variation>V</variation>
    <location>
        <position position="824"/>
    </location>
</feature>
<feature type="sequence conflict" description="In Ref. 3; AAB60638." evidence="6" ref="3">
    <original>V</original>
    <variation>A</variation>
    <location>
        <position position="983"/>
    </location>
</feature>
<keyword id="KW-0106">Calcium</keyword>
<keyword id="KW-0130">Cell adhesion</keyword>
<keyword id="KW-1015">Disulfide bond</keyword>
<keyword id="KW-0325">Glycoprotein</keyword>
<keyword id="KW-0401">Integrin</keyword>
<keyword id="KW-0460">Magnesium</keyword>
<keyword id="KW-0472">Membrane</keyword>
<keyword id="KW-0479">Metal-binding</keyword>
<keyword id="KW-1267">Proteomics identification</keyword>
<keyword id="KW-0675">Receptor</keyword>
<keyword id="KW-1185">Reference proteome</keyword>
<keyword id="KW-0677">Repeat</keyword>
<keyword id="KW-0732">Signal</keyword>
<keyword id="KW-0812">Transmembrane</keyword>
<keyword id="KW-1133">Transmembrane helix</keyword>
<accession>Q13349</accession>
<accession>Q15575</accession>
<accession>Q15576</accession>
<comment type="function">
    <text>Integrin alpha-D/beta-2 is a receptor for ICAM3 and VCAM1. May play a role in the atherosclerotic process such as clearing lipoproteins from plaques and in phagocytosis of blood-borne pathogens, particulate matter, and senescent erythrocytes from the blood.</text>
</comment>
<comment type="subunit">
    <text>Heterodimer of an alpha and a beta subunit. Alpha-D associates with beta-2.</text>
</comment>
<comment type="subcellular location">
    <subcellularLocation>
        <location>Membrane</location>
        <topology>Single-pass type I membrane protein</topology>
    </subcellularLocation>
</comment>
<comment type="tissue specificity">
    <text>Expressed moderately on myelomonocytic cell lines and subsets of peripheral blood leukocytes and strongly on tissue-specialized cells, including macrophages foam cells within atherosclerotic plaques, and on splenic red pulp macrophages.</text>
</comment>
<comment type="domain">
    <text>The integrin I-domain (insert) is a VWFA domain. Integrins with I-domains do not undergo protease cleavage.</text>
</comment>
<comment type="similarity">
    <text evidence="6">Belongs to the integrin alpha chain family.</text>
</comment>
<comment type="sequence caution" evidence="6">
    <conflict type="miscellaneous discrepancy">
        <sequence resource="EMBL-CDS" id="AAB60634"/>
    </conflict>
</comment>
<evidence type="ECO:0000250" key="1"/>
<evidence type="ECO:0000250" key="2">
    <source>
        <dbReference type="UniProtKB" id="P08648"/>
    </source>
</evidence>
<evidence type="ECO:0000255" key="3"/>
<evidence type="ECO:0000255" key="4">
    <source>
        <dbReference type="PROSITE-ProRule" id="PRU00219"/>
    </source>
</evidence>
<evidence type="ECO:0000255" key="5">
    <source>
        <dbReference type="PROSITE-ProRule" id="PRU00803"/>
    </source>
</evidence>
<evidence type="ECO:0000305" key="6"/>
<protein>
    <recommendedName>
        <fullName>Integrin alpha-D</fullName>
    </recommendedName>
    <alternativeName>
        <fullName>ADB2</fullName>
    </alternativeName>
    <alternativeName>
        <fullName>CD11 antigen-like family member D</fullName>
    </alternativeName>
    <alternativeName>
        <fullName>Leukointegrin alpha D</fullName>
    </alternativeName>
    <cdAntigenName>CD11d</cdAntigenName>
</protein>
<proteinExistence type="evidence at protein level"/>
<gene>
    <name type="primary">ITGAD</name>
</gene>
<sequence length="1161" mass="126758">MTFGTVLLLSVLASYHGFNLDVEEPTIFQEDAGGFGQSVVQFGGSRLVVGAPLEVVAANQTGRLYDCAAATGMCQPIPLHIRPEAVNMSLGLTLAASTNGSRLLACGPTLHRVCGENSYSKGSCLLLGSRWEIIQTVPDATPECPHQEMDIVFLIDGSGSIDQNDFNQMKGFVQAVMGQFEGTDTLFALMQYSNLLKIHFTFTQFRTSPSQQSLVDPIVQLKGLTFTATGILTVVTQLFHHKNGARKSAKKILIVITDGQKYKDPLEYSDVIPQAEKAGIIRYAIGVGHAFQGPTARQELNTISSAPPQDHVFKVDNFAALGSIQKQLQEKIYAVEGTQSRASSSFQHEMSQEGFSTALTMDGLFLGAVGSFSWSGGAFLYPPNMSPTFINMSQENVDMRDSYLGYSTELALWKGVQNLVLGAPRYQHTGKAVIFTQVSRQWRKKAEVTGTQIGSYFGASLCSVDVDSDGSTDLILIGAPHYYEQTRGGQVSVCPLPRGRVQWQCDAVLRGEQGHPWGRFGAALTVLGDVNEDKLIDVAIGAPGEQENRGAVYLFHGASESGISPSHSQRIASSQLSPRLQYFGQALSGGQDLTQDGLMDLAVGARGQVLLLRSLPVLKVGVAMRFSPVEVAKAVYRCWEEKPSALEAGDATVCLTIQKSSLDQLGDIQSSVRFDLALDPGRLTSRAIFNETKNPTLTRRKTLGLGIHCETLKLLLPDCVEDVVSPIILHLNFSLVREPIPSPQNLRPVLAVGSQDLFTASLPFEKNCGQDGLCEGDLGVTLSFSGLQTLTVGSSLELNVIVTVWNAGEDSYGTVVSLYYPAGLSHRRVSGAQKQPHQSALRLACETVPTEDEGLRSSRCSVNHPIFHEGSNGTFIVTFDVSYKATLGDRMLMRASASSENNKASSSKATFQLELPVKYAVYTMISRQEESTKYFNFATSDEKKMKEAEHRYRVNNLSQRDLAISINFWVPVLLNGVAVWDVVMEAPSQSLPCVSERKPPQHSDFLTQISRSPMLDCSIADCLQFRCDVPSFSVQEELDFTLKGNLSFGWVRETLQKKVLVVSVAEITFDTSVYSQLPGQEAFMRAQMEMVLEEDEVYNAIPIIMGSSVGALLLLALITATLYKLGFFKRHYKEMLEDKPEDTATFSGDDFSCVAPNVPLS</sequence>